<protein>
    <recommendedName>
        <fullName evidence="1">Tryptophan synthase alpha chain</fullName>
        <ecNumber evidence="1">4.2.1.20</ecNumber>
    </recommendedName>
</protein>
<name>TRPA_MYCTA</name>
<gene>
    <name evidence="1" type="primary">trpA</name>
    <name type="ordered locus">MRA_1623</name>
</gene>
<accession>A5U2W9</accession>
<comment type="function">
    <text evidence="1">The alpha subunit is responsible for the aldol cleavage of indoleglycerol phosphate to indole and glyceraldehyde 3-phosphate.</text>
</comment>
<comment type="catalytic activity">
    <reaction evidence="1">
        <text>(1S,2R)-1-C-(indol-3-yl)glycerol 3-phosphate + L-serine = D-glyceraldehyde 3-phosphate + L-tryptophan + H2O</text>
        <dbReference type="Rhea" id="RHEA:10532"/>
        <dbReference type="ChEBI" id="CHEBI:15377"/>
        <dbReference type="ChEBI" id="CHEBI:33384"/>
        <dbReference type="ChEBI" id="CHEBI:57912"/>
        <dbReference type="ChEBI" id="CHEBI:58866"/>
        <dbReference type="ChEBI" id="CHEBI:59776"/>
        <dbReference type="EC" id="4.2.1.20"/>
    </reaction>
</comment>
<comment type="pathway">
    <text evidence="1">Amino-acid biosynthesis; L-tryptophan biosynthesis; L-tryptophan from chorismate: step 5/5.</text>
</comment>
<comment type="subunit">
    <text evidence="1">Tetramer of two alpha and two beta chains.</text>
</comment>
<comment type="similarity">
    <text evidence="1">Belongs to the TrpA family.</text>
</comment>
<sequence>MVAVEQSEASRLGPVFDSCRANNRAALIGYLPTGYPDVPASVAAMTALVESGCDIIEVGVPYSDPGMDGPTIARATEAALRGGVRVRDTLAAVEAISIAGGRAVVMTYWNPVLRYGVDAFARDLAAAGGLGLITPDLIPDEAQQWLAASEEHRLDRIFLVAPSSTPERLAATVEASRGFVYAASTMGVTGARDAVSQAAPELVGRVKAVSDIPVGVGLGVRSRAQAAQIAQYADGVIVGSALVTALTEGLPRLRALTGELAAGVRLGMSA</sequence>
<reference key="1">
    <citation type="journal article" date="2008" name="PLoS ONE">
        <title>Genetic basis of virulence attenuation revealed by comparative genomic analysis of Mycobacterium tuberculosis strain H37Ra versus H37Rv.</title>
        <authorList>
            <person name="Zheng H."/>
            <person name="Lu L."/>
            <person name="Wang B."/>
            <person name="Pu S."/>
            <person name="Zhang X."/>
            <person name="Zhu G."/>
            <person name="Shi W."/>
            <person name="Zhang L."/>
            <person name="Wang H."/>
            <person name="Wang S."/>
            <person name="Zhao G."/>
            <person name="Zhang Y."/>
        </authorList>
    </citation>
    <scope>NUCLEOTIDE SEQUENCE [LARGE SCALE GENOMIC DNA]</scope>
    <source>
        <strain>ATCC 25177 / H37Ra</strain>
    </source>
</reference>
<dbReference type="EC" id="4.2.1.20" evidence="1"/>
<dbReference type="EMBL" id="CP000611">
    <property type="protein sequence ID" value="ABQ73369.1"/>
    <property type="molecule type" value="Genomic_DNA"/>
</dbReference>
<dbReference type="RefSeq" id="WP_003407999.1">
    <property type="nucleotide sequence ID" value="NZ_CP016972.1"/>
</dbReference>
<dbReference type="SMR" id="A5U2W9"/>
<dbReference type="GeneID" id="45425581"/>
<dbReference type="KEGG" id="mra:MRA_1623"/>
<dbReference type="eggNOG" id="COG0159">
    <property type="taxonomic scope" value="Bacteria"/>
</dbReference>
<dbReference type="HOGENOM" id="CLU_016734_0_0_11"/>
<dbReference type="UniPathway" id="UPA00035">
    <property type="reaction ID" value="UER00044"/>
</dbReference>
<dbReference type="Proteomes" id="UP000001988">
    <property type="component" value="Chromosome"/>
</dbReference>
<dbReference type="GO" id="GO:0005829">
    <property type="term" value="C:cytosol"/>
    <property type="evidence" value="ECO:0007669"/>
    <property type="project" value="TreeGrafter"/>
</dbReference>
<dbReference type="GO" id="GO:0004834">
    <property type="term" value="F:tryptophan synthase activity"/>
    <property type="evidence" value="ECO:0007669"/>
    <property type="project" value="UniProtKB-UniRule"/>
</dbReference>
<dbReference type="CDD" id="cd04724">
    <property type="entry name" value="Tryptophan_synthase_alpha"/>
    <property type="match status" value="1"/>
</dbReference>
<dbReference type="FunFam" id="3.20.20.70:FF:000037">
    <property type="entry name" value="Tryptophan synthase alpha chain"/>
    <property type="match status" value="1"/>
</dbReference>
<dbReference type="Gene3D" id="3.20.20.70">
    <property type="entry name" value="Aldolase class I"/>
    <property type="match status" value="1"/>
</dbReference>
<dbReference type="HAMAP" id="MF_00131">
    <property type="entry name" value="Trp_synth_alpha"/>
    <property type="match status" value="1"/>
</dbReference>
<dbReference type="InterPro" id="IPR013785">
    <property type="entry name" value="Aldolase_TIM"/>
</dbReference>
<dbReference type="InterPro" id="IPR011060">
    <property type="entry name" value="RibuloseP-bd_barrel"/>
</dbReference>
<dbReference type="InterPro" id="IPR018204">
    <property type="entry name" value="Trp_synthase_alpha_AS"/>
</dbReference>
<dbReference type="InterPro" id="IPR002028">
    <property type="entry name" value="Trp_synthase_suA"/>
</dbReference>
<dbReference type="NCBIfam" id="TIGR00262">
    <property type="entry name" value="trpA"/>
    <property type="match status" value="1"/>
</dbReference>
<dbReference type="PANTHER" id="PTHR43406:SF1">
    <property type="entry name" value="TRYPTOPHAN SYNTHASE ALPHA CHAIN, CHLOROPLASTIC"/>
    <property type="match status" value="1"/>
</dbReference>
<dbReference type="PANTHER" id="PTHR43406">
    <property type="entry name" value="TRYPTOPHAN SYNTHASE, ALPHA CHAIN"/>
    <property type="match status" value="1"/>
</dbReference>
<dbReference type="Pfam" id="PF00290">
    <property type="entry name" value="Trp_syntA"/>
    <property type="match status" value="1"/>
</dbReference>
<dbReference type="SUPFAM" id="SSF51366">
    <property type="entry name" value="Ribulose-phoshate binding barrel"/>
    <property type="match status" value="1"/>
</dbReference>
<dbReference type="PROSITE" id="PS00167">
    <property type="entry name" value="TRP_SYNTHASE_ALPHA"/>
    <property type="match status" value="1"/>
</dbReference>
<feature type="chain" id="PRO_1000018234" description="Tryptophan synthase alpha chain">
    <location>
        <begin position="1"/>
        <end position="270"/>
    </location>
</feature>
<feature type="active site" description="Proton acceptor" evidence="1">
    <location>
        <position position="57"/>
    </location>
</feature>
<feature type="active site" description="Proton acceptor" evidence="1">
    <location>
        <position position="68"/>
    </location>
</feature>
<organism>
    <name type="scientific">Mycobacterium tuberculosis (strain ATCC 25177 / H37Ra)</name>
    <dbReference type="NCBI Taxonomy" id="419947"/>
    <lineage>
        <taxon>Bacteria</taxon>
        <taxon>Bacillati</taxon>
        <taxon>Actinomycetota</taxon>
        <taxon>Actinomycetes</taxon>
        <taxon>Mycobacteriales</taxon>
        <taxon>Mycobacteriaceae</taxon>
        <taxon>Mycobacterium</taxon>
        <taxon>Mycobacterium tuberculosis complex</taxon>
    </lineage>
</organism>
<proteinExistence type="inferred from homology"/>
<keyword id="KW-0028">Amino-acid biosynthesis</keyword>
<keyword id="KW-0057">Aromatic amino acid biosynthesis</keyword>
<keyword id="KW-0456">Lyase</keyword>
<keyword id="KW-1185">Reference proteome</keyword>
<keyword id="KW-0822">Tryptophan biosynthesis</keyword>
<evidence type="ECO:0000255" key="1">
    <source>
        <dbReference type="HAMAP-Rule" id="MF_00131"/>
    </source>
</evidence>